<reference key="1">
    <citation type="submission" date="2003-03" db="EMBL/GenBank/DDBJ databases">
        <title>African swine fever virus genomes.</title>
        <authorList>
            <person name="Kutish G.F."/>
            <person name="Rock D.L."/>
        </authorList>
    </citation>
    <scope>NUCLEOTIDE SEQUENCE [LARGE SCALE GENOMIC DNA]</scope>
</reference>
<organismHost>
    <name type="scientific">Ornithodoros</name>
    <name type="common">relapsing fever ticks</name>
    <dbReference type="NCBI Taxonomy" id="6937"/>
</organismHost>
<organismHost>
    <name type="scientific">Phacochoerus aethiopicus</name>
    <name type="common">Warthog</name>
    <dbReference type="NCBI Taxonomy" id="85517"/>
</organismHost>
<organismHost>
    <name type="scientific">Phacochoerus africanus</name>
    <name type="common">Warthog</name>
    <dbReference type="NCBI Taxonomy" id="41426"/>
</organismHost>
<organismHost>
    <name type="scientific">Potamochoerus larvatus</name>
    <name type="common">Bushpig</name>
    <dbReference type="NCBI Taxonomy" id="273792"/>
</organismHost>
<organismHost>
    <name type="scientific">Sus scrofa</name>
    <name type="common">Pig</name>
    <dbReference type="NCBI Taxonomy" id="9823"/>
</organismHost>
<feature type="chain" id="PRO_0000373709" description="Uncharacterized protein C62L">
    <location>
        <begin position="1"/>
        <end position="62"/>
    </location>
</feature>
<accession>P0CAI6</accession>
<sequence length="62" mass="7171">MNRGSISSGTPGLFVGSMRNTPFVVKINVIFLKVISNTAVSVFWRDRRIRFESDWLNSYFQK</sequence>
<comment type="similarity">
    <text evidence="1">Belongs to the asfivirus C62L family.</text>
</comment>
<organism>
    <name type="scientific">African swine fever virus (isolate Warthog/Namibia/Wart80/1980)</name>
    <name type="common">ASFV</name>
    <dbReference type="NCBI Taxonomy" id="561444"/>
    <lineage>
        <taxon>Viruses</taxon>
        <taxon>Varidnaviria</taxon>
        <taxon>Bamfordvirae</taxon>
        <taxon>Nucleocytoviricota</taxon>
        <taxon>Pokkesviricetes</taxon>
        <taxon>Asfuvirales</taxon>
        <taxon>Asfarviridae</taxon>
        <taxon>Asfivirus</taxon>
        <taxon>African swine fever virus</taxon>
    </lineage>
</organism>
<name>VF62_ASFWA</name>
<evidence type="ECO:0000305" key="1"/>
<gene>
    <name type="ordered locus">War-080</name>
</gene>
<protein>
    <recommendedName>
        <fullName>Uncharacterized protein C62L</fullName>
        <shortName>pC62L</shortName>
    </recommendedName>
</protein>
<proteinExistence type="inferred from homology"/>
<dbReference type="EMBL" id="AY261366">
    <property type="status" value="NOT_ANNOTATED_CDS"/>
    <property type="molecule type" value="Genomic_DNA"/>
</dbReference>
<dbReference type="Proteomes" id="UP000000858">
    <property type="component" value="Segment"/>
</dbReference>